<organism>
    <name type="scientific">Agrostis stolonifera</name>
    <name type="common">Creeping bentgrass</name>
    <dbReference type="NCBI Taxonomy" id="63632"/>
    <lineage>
        <taxon>Eukaryota</taxon>
        <taxon>Viridiplantae</taxon>
        <taxon>Streptophyta</taxon>
        <taxon>Embryophyta</taxon>
        <taxon>Tracheophyta</taxon>
        <taxon>Spermatophyta</taxon>
        <taxon>Magnoliopsida</taxon>
        <taxon>Liliopsida</taxon>
        <taxon>Poales</taxon>
        <taxon>Poaceae</taxon>
        <taxon>BOP clade</taxon>
        <taxon>Pooideae</taxon>
        <taxon>Poodae</taxon>
        <taxon>Poeae</taxon>
        <taxon>Poeae Chloroplast Group 1 (Aveneae type)</taxon>
        <taxon>Agrostidodinae</taxon>
        <taxon>Agrostidinae</taxon>
        <taxon>Agrostis</taxon>
    </lineage>
</organism>
<protein>
    <recommendedName>
        <fullName evidence="1">ATP synthase subunit beta, chloroplastic</fullName>
        <ecNumber evidence="1">7.1.2.2</ecNumber>
    </recommendedName>
    <alternativeName>
        <fullName evidence="1">ATP synthase F1 sector subunit beta</fullName>
    </alternativeName>
    <alternativeName>
        <fullName evidence="1">F-ATPase subunit beta</fullName>
    </alternativeName>
</protein>
<feature type="chain" id="PRO_0000275177" description="ATP synthase subunit beta, chloroplastic">
    <location>
        <begin position="1"/>
        <end position="498"/>
    </location>
</feature>
<feature type="binding site" evidence="1">
    <location>
        <begin position="172"/>
        <end position="179"/>
    </location>
    <ligand>
        <name>ATP</name>
        <dbReference type="ChEBI" id="CHEBI:30616"/>
    </ligand>
</feature>
<keyword id="KW-0066">ATP synthesis</keyword>
<keyword id="KW-0067">ATP-binding</keyword>
<keyword id="KW-0139">CF(1)</keyword>
<keyword id="KW-0150">Chloroplast</keyword>
<keyword id="KW-0375">Hydrogen ion transport</keyword>
<keyword id="KW-0406">Ion transport</keyword>
<keyword id="KW-0472">Membrane</keyword>
<keyword id="KW-0547">Nucleotide-binding</keyword>
<keyword id="KW-0934">Plastid</keyword>
<keyword id="KW-0793">Thylakoid</keyword>
<keyword id="KW-1278">Translocase</keyword>
<keyword id="KW-0813">Transport</keyword>
<evidence type="ECO:0000255" key="1">
    <source>
        <dbReference type="HAMAP-Rule" id="MF_01347"/>
    </source>
</evidence>
<geneLocation type="chloroplast"/>
<accession>A1EA15</accession>
<gene>
    <name evidence="1" type="primary">atpB</name>
</gene>
<dbReference type="EC" id="7.1.2.2" evidence="1"/>
<dbReference type="EMBL" id="EF115543">
    <property type="protein sequence ID" value="ABK79587.1"/>
    <property type="molecule type" value="Genomic_DNA"/>
</dbReference>
<dbReference type="RefSeq" id="YP_874743.1">
    <property type="nucleotide sequence ID" value="NC_008591.1"/>
</dbReference>
<dbReference type="SMR" id="A1EA15"/>
<dbReference type="GeneID" id="4524985"/>
<dbReference type="GO" id="GO:0009535">
    <property type="term" value="C:chloroplast thylakoid membrane"/>
    <property type="evidence" value="ECO:0007669"/>
    <property type="project" value="UniProtKB-SubCell"/>
</dbReference>
<dbReference type="GO" id="GO:0005739">
    <property type="term" value="C:mitochondrion"/>
    <property type="evidence" value="ECO:0007669"/>
    <property type="project" value="GOC"/>
</dbReference>
<dbReference type="GO" id="GO:0045259">
    <property type="term" value="C:proton-transporting ATP synthase complex"/>
    <property type="evidence" value="ECO:0007669"/>
    <property type="project" value="UniProtKB-KW"/>
</dbReference>
<dbReference type="GO" id="GO:0005524">
    <property type="term" value="F:ATP binding"/>
    <property type="evidence" value="ECO:0007669"/>
    <property type="project" value="UniProtKB-UniRule"/>
</dbReference>
<dbReference type="GO" id="GO:0016887">
    <property type="term" value="F:ATP hydrolysis activity"/>
    <property type="evidence" value="ECO:0007669"/>
    <property type="project" value="InterPro"/>
</dbReference>
<dbReference type="GO" id="GO:0046933">
    <property type="term" value="F:proton-transporting ATP synthase activity, rotational mechanism"/>
    <property type="evidence" value="ECO:0007669"/>
    <property type="project" value="UniProtKB-UniRule"/>
</dbReference>
<dbReference type="GO" id="GO:0042776">
    <property type="term" value="P:proton motive force-driven mitochondrial ATP synthesis"/>
    <property type="evidence" value="ECO:0007669"/>
    <property type="project" value="TreeGrafter"/>
</dbReference>
<dbReference type="CDD" id="cd18110">
    <property type="entry name" value="ATP-synt_F1_beta_C"/>
    <property type="match status" value="1"/>
</dbReference>
<dbReference type="CDD" id="cd18115">
    <property type="entry name" value="ATP-synt_F1_beta_N"/>
    <property type="match status" value="1"/>
</dbReference>
<dbReference type="CDD" id="cd01133">
    <property type="entry name" value="F1-ATPase_beta_CD"/>
    <property type="match status" value="1"/>
</dbReference>
<dbReference type="FunFam" id="1.10.1140.10:FF:000001">
    <property type="entry name" value="ATP synthase subunit beta"/>
    <property type="match status" value="1"/>
</dbReference>
<dbReference type="FunFam" id="3.40.50.300:FF:000026">
    <property type="entry name" value="ATP synthase subunit beta"/>
    <property type="match status" value="1"/>
</dbReference>
<dbReference type="FunFam" id="2.40.10.170:FF:000002">
    <property type="entry name" value="ATP synthase subunit beta, chloroplastic"/>
    <property type="match status" value="1"/>
</dbReference>
<dbReference type="Gene3D" id="2.40.10.170">
    <property type="match status" value="1"/>
</dbReference>
<dbReference type="Gene3D" id="1.10.1140.10">
    <property type="entry name" value="Bovine Mitochondrial F1-atpase, Atp Synthase Beta Chain, Chain D, domain 3"/>
    <property type="match status" value="1"/>
</dbReference>
<dbReference type="Gene3D" id="3.40.50.300">
    <property type="entry name" value="P-loop containing nucleotide triphosphate hydrolases"/>
    <property type="match status" value="1"/>
</dbReference>
<dbReference type="HAMAP" id="MF_01347">
    <property type="entry name" value="ATP_synth_beta_bact"/>
    <property type="match status" value="1"/>
</dbReference>
<dbReference type="InterPro" id="IPR003593">
    <property type="entry name" value="AAA+_ATPase"/>
</dbReference>
<dbReference type="InterPro" id="IPR055190">
    <property type="entry name" value="ATP-synt_VA_C"/>
</dbReference>
<dbReference type="InterPro" id="IPR005722">
    <property type="entry name" value="ATP_synth_F1_bsu"/>
</dbReference>
<dbReference type="InterPro" id="IPR020003">
    <property type="entry name" value="ATPase_a/bsu_AS"/>
</dbReference>
<dbReference type="InterPro" id="IPR050053">
    <property type="entry name" value="ATPase_alpha/beta_chains"/>
</dbReference>
<dbReference type="InterPro" id="IPR004100">
    <property type="entry name" value="ATPase_F1/V1/A1_a/bsu_N"/>
</dbReference>
<dbReference type="InterPro" id="IPR036121">
    <property type="entry name" value="ATPase_F1/V1/A1_a/bsu_N_sf"/>
</dbReference>
<dbReference type="InterPro" id="IPR000194">
    <property type="entry name" value="ATPase_F1/V1/A1_a/bsu_nucl-bd"/>
</dbReference>
<dbReference type="InterPro" id="IPR024034">
    <property type="entry name" value="ATPase_F1/V1_b/a_C"/>
</dbReference>
<dbReference type="InterPro" id="IPR027417">
    <property type="entry name" value="P-loop_NTPase"/>
</dbReference>
<dbReference type="NCBIfam" id="TIGR01039">
    <property type="entry name" value="atpD"/>
    <property type="match status" value="1"/>
</dbReference>
<dbReference type="PANTHER" id="PTHR15184">
    <property type="entry name" value="ATP SYNTHASE"/>
    <property type="match status" value="1"/>
</dbReference>
<dbReference type="PANTHER" id="PTHR15184:SF71">
    <property type="entry name" value="ATP SYNTHASE SUBUNIT BETA, MITOCHONDRIAL"/>
    <property type="match status" value="1"/>
</dbReference>
<dbReference type="Pfam" id="PF00006">
    <property type="entry name" value="ATP-synt_ab"/>
    <property type="match status" value="1"/>
</dbReference>
<dbReference type="Pfam" id="PF02874">
    <property type="entry name" value="ATP-synt_ab_N"/>
    <property type="match status" value="1"/>
</dbReference>
<dbReference type="Pfam" id="PF22919">
    <property type="entry name" value="ATP-synt_VA_C"/>
    <property type="match status" value="1"/>
</dbReference>
<dbReference type="SMART" id="SM00382">
    <property type="entry name" value="AAA"/>
    <property type="match status" value="1"/>
</dbReference>
<dbReference type="SUPFAM" id="SSF47917">
    <property type="entry name" value="C-terminal domain of alpha and beta subunits of F1 ATP synthase"/>
    <property type="match status" value="1"/>
</dbReference>
<dbReference type="SUPFAM" id="SSF50615">
    <property type="entry name" value="N-terminal domain of alpha and beta subunits of F1 ATP synthase"/>
    <property type="match status" value="1"/>
</dbReference>
<dbReference type="SUPFAM" id="SSF52540">
    <property type="entry name" value="P-loop containing nucleoside triphosphate hydrolases"/>
    <property type="match status" value="1"/>
</dbReference>
<dbReference type="PROSITE" id="PS00152">
    <property type="entry name" value="ATPASE_ALPHA_BETA"/>
    <property type="match status" value="1"/>
</dbReference>
<reference key="1">
    <citation type="journal article" date="2007" name="Theor. Appl. Genet.">
        <title>Complete chloroplast genome sequences of Hordeum vulgare, Sorghum bicolor and Agrostis stolonifera, and comparative analyses with other grass genomes.</title>
        <authorList>
            <person name="Saski C."/>
            <person name="Lee S.-B."/>
            <person name="Fjellheim S."/>
            <person name="Guda C."/>
            <person name="Jansen R.K."/>
            <person name="Luo H."/>
            <person name="Tomkins J."/>
            <person name="Rognli O.A."/>
            <person name="Daniell H."/>
            <person name="Clarke J.L."/>
        </authorList>
    </citation>
    <scope>NUCLEOTIDE SEQUENCE [LARGE SCALE GENOMIC DNA]</scope>
    <source>
        <strain>cv. Penn A-4</strain>
    </source>
</reference>
<name>ATPB_AGRST</name>
<sequence length="498" mass="53816">MSTNPTSSRPGVSTIDEKNTGRIDQIIGPVLDVTFPPGKLPYIYNALVVQSRDTADKQINVTCEVQQLLGNNRVRAVAMSATDGLMRGMEVIDTGAPLSVPVGGATLGRIFNVLGEPVDNLGPVDSSATFPIHRSAPAFIELDTKLSIFETGIKVVDLLAPYRRGGKIGLFGGAGVGKTVLIMELINNIAKAHGGVSVFGGVGERTREGNDLYMEMKESGVINEKNIEESKVALVYGQMNEPPGARMRVGLTALTMAEYFRDVNKQDVLLFIDNIFRFVQAGSEVSALLGRMPSAVGYQPTLSTEMGSLQERIASTKKGSITSIQAVYVPADDLTDPAPATTFAHLDATTVLSRGLASKGIYPAVDPLDSTSTMLQPRIVGNEHYETAQRVKETLQRYKELQDIIAILGLDELSEEDRLTVARARKIERFLSQPFFVAEVFTGSPGKYVGLAETIRGFQLILSGELDGLPEQAFYLVGNIDEASTKAITLEEENKSKK</sequence>
<proteinExistence type="inferred from homology"/>
<comment type="function">
    <text evidence="1">Produces ATP from ADP in the presence of a proton gradient across the membrane. The catalytic sites are hosted primarily by the beta subunits.</text>
</comment>
<comment type="catalytic activity">
    <reaction evidence="1">
        <text>ATP + H2O + 4 H(+)(in) = ADP + phosphate + 5 H(+)(out)</text>
        <dbReference type="Rhea" id="RHEA:57720"/>
        <dbReference type="ChEBI" id="CHEBI:15377"/>
        <dbReference type="ChEBI" id="CHEBI:15378"/>
        <dbReference type="ChEBI" id="CHEBI:30616"/>
        <dbReference type="ChEBI" id="CHEBI:43474"/>
        <dbReference type="ChEBI" id="CHEBI:456216"/>
        <dbReference type="EC" id="7.1.2.2"/>
    </reaction>
</comment>
<comment type="subunit">
    <text evidence="1">F-type ATPases have 2 components, CF(1) - the catalytic core - and CF(0) - the membrane proton channel. CF(1) has five subunits: alpha(3), beta(3), gamma(1), delta(1), epsilon(1). CF(0) has four main subunits: a(1), b(1), b'(1) and c(9-12).</text>
</comment>
<comment type="subcellular location">
    <subcellularLocation>
        <location evidence="1">Plastid</location>
        <location evidence="1">Chloroplast thylakoid membrane</location>
        <topology evidence="1">Peripheral membrane protein</topology>
    </subcellularLocation>
</comment>
<comment type="similarity">
    <text evidence="1">Belongs to the ATPase alpha/beta chains family.</text>
</comment>